<comment type="function">
    <text evidence="3 4 7 8">Component of the MRN complex, which plays a central role in double-strand break (DSB) repair, DNA recombination, maintenance of telomere integrity and meiosis (PubMed:10377422, PubMed:12208847). The MRN complex is involved in the repair of DNA double-strand breaks (DSBs) via homologous recombination (HR), an error-free mechanism which primarily occurs during S and G2 phases (By similarity). The complex (1) mediates the end resection of damaged DNA, which generates proper single-stranded DNA, a key initial steps in HR, and is (2) required for the recruitment of other repair factors and efficient activation of ATM and ATR upon DNA damage (By similarity). The MRN complex possesses single-strand endonuclease activity and double-strand-specific 3'-5' exonuclease activity, which are provided by MRE11, to initiate end resection, which is required for single-strand invasion and recombination (By similarity). Within the complex, RAD50 is both required to bind DNA ends and hold them in close proximity and regulate the activity of MRE11 (By similarity). RAD50 provides an ATP-dependent control of MRE11 by positioning DNA ends into the MRE11 active site: ATP-binding induces a large structural change from an open form with accessible MRE11 nuclease sites into a closed form (By similarity). The MRN complex is also required for DNA damage signaling via activation of the ATM and ATR kinases: the nuclease activity of MRE11 is not required to activate ATM and ATR (By similarity). The MRN complex is also required for the processing of R-loops. In telomeres the MRN complex may modulate t-loop formation (By similarity).</text>
</comment>
<comment type="catalytic activity">
    <reaction evidence="3">
        <text>ATP + H2O = ADP + phosphate + H(+)</text>
        <dbReference type="Rhea" id="RHEA:13065"/>
        <dbReference type="ChEBI" id="CHEBI:15377"/>
        <dbReference type="ChEBI" id="CHEBI:15378"/>
        <dbReference type="ChEBI" id="CHEBI:30616"/>
        <dbReference type="ChEBI" id="CHEBI:43474"/>
        <dbReference type="ChEBI" id="CHEBI:456216"/>
    </reaction>
</comment>
<comment type="cofactor">
    <cofactor evidence="3">
        <name>Zn(2+)</name>
        <dbReference type="ChEBI" id="CHEBI:29105"/>
    </cofactor>
    <text evidence="3">Binds 1 zinc ion per homodimer.</text>
</comment>
<comment type="subunit">
    <text evidence="3 9">Component of the MRN complex composed of two heterodimers RAD50 and MRE11 associated with a single NBN (By similarity). The MRN complexes dimerize on DNA to form joined MRN-MRN oligomers required for DNA double-strand break repair (By similarity). As part of the MRN complex, interacts with MCM8 and MCM9; the interaction recruits the complex to DNA repair sites (By similarity). Component of the BASC complex, at least composed of BRCA1, MSH2, MSH6, MLH1, ATM, BLM, RAD50, MRE11 and NBN (By similarity). Found in a complex with TERF2 (By similarity). Interacts with RINT1 (By similarity). Interacts with BRCA1 via its N-terminal domain (By similarity). Interacts with DCLRE1C/Artemis (By similarity). Interacts with MRNIP (By similarity). Interacts with CYREN (via XLF motif) (PubMed:30017584). Interacts with C1QBP and MRE11; interaction takes place in absence of DNA damage to form the MRC (MRE11-RAD50-C1QBP) complex that inhibits the activity of MRE11 (By similarity).</text>
</comment>
<comment type="subcellular location">
    <subcellularLocation>
        <location evidence="3">Nucleus</location>
    </subcellularLocation>
    <subcellularLocation>
        <location evidence="3">Chromosome</location>
        <location evidence="3">Telomere</location>
    </subcellularLocation>
    <subcellularLocation>
        <location evidence="3">Chromosome</location>
    </subcellularLocation>
    <text evidence="3">Localizes to discrete nuclear foci after treatment with genotoxic agents. Localizes to DNA double-strand breaks (DSBs).</text>
</comment>
<comment type="alternative products">
    <event type="alternative splicing"/>
    <isoform>
        <id>P70388-1</id>
        <name>1</name>
        <sequence type="displayed"/>
    </isoform>
    <isoform>
        <id>P70388-2</id>
        <name>2</name>
        <sequence type="described" ref="VSP_012593"/>
    </isoform>
    <isoform>
        <id>P70388-3</id>
        <name>3</name>
        <name>3.1 kb splice variant</name>
        <sequence type="described" ref="VSP_012592"/>
    </isoform>
    <isoform>
        <id>P70388-4</id>
        <name>4</name>
        <name>1.6 kb splice variant</name>
        <sequence type="described" ref="VSP_012594 VSP_012595"/>
    </isoform>
</comment>
<comment type="tissue specificity">
    <text evidence="10">In adult, it is expressed at very low level in most tissues, except in heart, lung and aorta. Expressed at high level in testis.</text>
</comment>
<comment type="developmental stage">
    <text evidence="10">Widely expressed. Expressed at higher level in heart, liver and thymus from 18 dpc. By neonatal day 1.5, it decreases in brain, liver, gut and skin, while it is expressed in spleen.</text>
</comment>
<comment type="domain">
    <text evidence="2">The zinc-hook, which separates the large intramolecular coiled coil regions, contains 2 Cys residues that coordinate one molecule of zinc with the help of the 2 Cys residues of the zinc-hook of another RAD50 molecule, thereby forming a V-shaped homodimer. The two heads of the homodimer, which constitute the ATP-binding domain, interact with the MRE11 homodimer.</text>
</comment>
<comment type="PTM">
    <text evidence="3">Phosphorylation at Ser-635 by ATM in response to DNA damage is required for double-strand break (DSB) repair.</text>
</comment>
<comment type="disruption phenotype">
    <text evidence="7">Defects cause embryonic stem cell lethality, abnormal embryonic development and sensitivity to ionizing radiation.</text>
</comment>
<comment type="similarity">
    <text evidence="13">Belongs to the SMC family. RAD50 subfamily.</text>
</comment>
<sequence length="1312" mass="153488">MSRIEKMSILGVRSFGIEDKDKQIISFFSPLTILVGPNGAGKTTIIECLKYICTGDFPPGTKGNTFVHDPKVAQETDVRAQIRLQFRDVNGEMVAVHRSMLCSQKNKKTEFKTLEGVITRMKHGEKVSLSSKCAEIDREMISCLGVSKSVLNNVIFCHQEDSNWPLSEGKALKQKFDEIFSATRYIKALDTLRQVRQTQGQKVKECQTELKYLKQNKEKACEIRDQITSKEAQLASSQEIVRSYEDELEPLKNRLKEIEHNLSKIMKLDNEIKALESRKKQMEKDNSELEQKMEKVFQGTDEQLNDLYHNHQRTVREKERRLVDCQRELEKLNKEARLLNQEKAELLVEQGRLQLQADRHQEHIRARDSLIQSLATHLELDGFERGPFSERQIKNFHELVKERQEREAKTASQLLSDLTDKEALKQRQLDELRDRKSGLGRTIELKTEILTKKQSELRHVRSELQQLEGSSDRILELDQELTKAERELSKAEKNSSIETLKAEVMSLQNEKADLDRSLRKLDQEMEQLNHHTTTRTQMEMLTKDKTDKDEQIRKIKSRHSDELTSLLGYFPNKKQLEDWLHSKSKEINQTRDRLAKLNKELASAEQNKNHINNELKKKEEQLSSYEDKLFDVCGSQDLESDLGRLKEEIEKSSKQRAMLAGATAVYSQFITQLTDENQSCCPVCQRVFQTEAELQEVISDLQSKLRLAPDKLKSTESELKKKERRRDEMLGLVPVRQSIIDLKEKEIPELRNRLQSVNRDIQRLKNDIEEQETLLGTIMPEEESAKVCLTDVTIMERFQMELKDVERKIAQQAAKLQGVDLDRTVQQVNQEKQEKQHRLDTVTSKIELNRKLIQDQQEQIQHLKSKTNELKSEKLQIATNLQRRQQMEEQSVELSTEVQSLNREIKDAKEQISPLETALEKLQQEKEELIHRKHTSNKMAQDKINDIKEKVKNIHGYMKDIENYIQDGKDDYKKQKETELNGVAVQLNECEKHREKINKDMGTMRQDIDTQKIQERWLQDNLTLRKRRDELKEVEEEPKQHLKEMGQMQVLQMKNEHQKLEENIDTIKRNHSLALGRQKGYEDEILHFKKELREPQFRDAEEKYREMMIVMRTTELVNKDLDIYYKTLDQAIMKFHSMKMEEINKIIRDLWRSTYRGQDIEYIEIRSDADENVSASDKRRNYNYRVVMLKGDTALDMRGRCSAGQKVLASLIIRLALAETFCLNCGILALDEPTTNLDRENIESLAHALVEIIKSRSQQRNFQLLVITHDEDFVELLGRSEYVEKFYRVKKNMDQCSEIVKCSISSLGSYVH</sequence>
<feature type="chain" id="PRO_0000138642" description="DNA repair protein RAD50">
    <location>
        <begin position="1"/>
        <end position="1312"/>
    </location>
</feature>
<feature type="domain" description="Zinc-hook" evidence="6">
    <location>
        <begin position="635"/>
        <end position="734"/>
    </location>
</feature>
<feature type="coiled-coil region" evidence="5">
    <location>
        <begin position="200"/>
        <end position="532"/>
    </location>
</feature>
<feature type="coiled-coil region" evidence="5">
    <location>
        <begin position="635"/>
        <end position="673"/>
    </location>
</feature>
<feature type="coiled-coil region" evidence="5">
    <location>
        <begin position="706"/>
        <end position="734"/>
    </location>
</feature>
<feature type="coiled-coil region" evidence="5">
    <location>
        <begin position="776"/>
        <end position="942"/>
    </location>
</feature>
<feature type="coiled-coil region" evidence="5">
    <location>
        <begin position="1043"/>
        <end position="1075"/>
    </location>
</feature>
<feature type="binding site" evidence="1">
    <location>
        <position position="13"/>
    </location>
    <ligand>
        <name>ATP</name>
        <dbReference type="ChEBI" id="CHEBI:30616"/>
    </ligand>
</feature>
<feature type="binding site" evidence="1">
    <location>
        <position position="38"/>
    </location>
    <ligand>
        <name>ATP</name>
        <dbReference type="ChEBI" id="CHEBI:30616"/>
    </ligand>
</feature>
<feature type="binding site" evidence="1">
    <location>
        <position position="39"/>
    </location>
    <ligand>
        <name>ATP</name>
        <dbReference type="ChEBI" id="CHEBI:30616"/>
    </ligand>
</feature>
<feature type="binding site" evidence="1">
    <location>
        <position position="41"/>
    </location>
    <ligand>
        <name>ATP</name>
        <dbReference type="ChEBI" id="CHEBI:30616"/>
    </ligand>
</feature>
<feature type="binding site" evidence="1">
    <location>
        <position position="42"/>
    </location>
    <ligand>
        <name>ATP</name>
        <dbReference type="ChEBI" id="CHEBI:30616"/>
    </ligand>
</feature>
<feature type="binding site" evidence="1">
    <location>
        <position position="43"/>
    </location>
    <ligand>
        <name>ATP</name>
        <dbReference type="ChEBI" id="CHEBI:30616"/>
    </ligand>
</feature>
<feature type="binding site" evidence="1">
    <location>
        <position position="43"/>
    </location>
    <ligand>
        <name>Mg(2+)</name>
        <dbReference type="ChEBI" id="CHEBI:18420"/>
    </ligand>
</feature>
<feature type="binding site" evidence="1">
    <location>
        <position position="44"/>
    </location>
    <ligand>
        <name>ATP</name>
        <dbReference type="ChEBI" id="CHEBI:30616"/>
    </ligand>
</feature>
<feature type="binding site" evidence="1">
    <location>
        <position position="67"/>
    </location>
    <ligand>
        <name>ATP</name>
        <dbReference type="ChEBI" id="CHEBI:30616"/>
    </ligand>
</feature>
<feature type="binding site" evidence="1">
    <location>
        <position position="69"/>
    </location>
    <ligand>
        <name>ATP</name>
        <dbReference type="ChEBI" id="CHEBI:30616"/>
    </ligand>
</feature>
<feature type="binding site" evidence="1">
    <location>
        <position position="159"/>
    </location>
    <ligand>
        <name>ATP</name>
        <dbReference type="ChEBI" id="CHEBI:30616"/>
    </ligand>
</feature>
<feature type="binding site" evidence="1">
    <location>
        <position position="159"/>
    </location>
    <ligand>
        <name>Mg(2+)</name>
        <dbReference type="ChEBI" id="CHEBI:18420"/>
    </ligand>
</feature>
<feature type="binding site" evidence="6">
    <location>
        <position position="681"/>
    </location>
    <ligand>
        <name>Zn(2+)</name>
        <dbReference type="ChEBI" id="CHEBI:29105"/>
    </ligand>
</feature>
<feature type="binding site" evidence="6">
    <location>
        <position position="684"/>
    </location>
    <ligand>
        <name>Zn(2+)</name>
        <dbReference type="ChEBI" id="CHEBI:29105"/>
    </ligand>
</feature>
<feature type="modified residue" description="Phosphoserine" evidence="14">
    <location>
        <position position="635"/>
    </location>
</feature>
<feature type="modified residue" description="Phosphothreonine" evidence="14">
    <location>
        <position position="690"/>
    </location>
</feature>
<feature type="modified residue" description="N6-acetyllysine" evidence="3">
    <location>
        <position position="959"/>
    </location>
</feature>
<feature type="splice variant" id="VSP_012592" description="In isoform 3." evidence="12">
    <location>
        <begin position="1"/>
        <end position="886"/>
    </location>
</feature>
<feature type="splice variant" id="VSP_012593" description="In isoform 2." evidence="11">
    <location>
        <begin position="485"/>
        <end position="545"/>
    </location>
</feature>
<feature type="splice variant" id="VSP_012594" description="In isoform 4." evidence="12">
    <original>ERELSKAEKNSS</original>
    <variation>IYFLELVRWLSG</variation>
    <location>
        <begin position="485"/>
        <end position="496"/>
    </location>
</feature>
<feature type="splice variant" id="VSP_012595" description="In isoform 4." evidence="12">
    <location>
        <begin position="497"/>
        <end position="1312"/>
    </location>
</feature>
<feature type="mutagenesis site" description="In Rad50S; hypomorphic allele that induces growth defects and cancer predisposition. Homozygous individuals die with complete bone marrow depletion as a result of progressive hematopoietic stem cell failure." evidence="8">
    <original>K</original>
    <variation>M</variation>
    <location>
        <position position="22"/>
    </location>
</feature>
<feature type="sequence conflict" description="In Ref. 2; BAB31030." evidence="13" ref="2">
    <original>H</original>
    <variation>Q</variation>
    <location>
        <position position="97"/>
    </location>
</feature>
<feature type="sequence conflict" description="In Ref. 3; AAH58180." evidence="13" ref="3">
    <original>G</original>
    <variation>V</variation>
    <location>
        <position position="200"/>
    </location>
</feature>
<feature type="sequence conflict" description="In Ref. 2; BAC40074." evidence="13" ref="2">
    <original>I</original>
    <variation>V</variation>
    <location>
        <position position="474"/>
    </location>
</feature>
<feature type="sequence conflict" description="In Ref. 2; BAC40074." evidence="13" ref="2">
    <original>E</original>
    <variation>A</variation>
    <location>
        <position position="718"/>
    </location>
</feature>
<feature type="sequence conflict" description="In Ref. 3; AAH58180." evidence="13" ref="3">
    <original>L</original>
    <variation>K</variation>
    <location>
        <position position="719"/>
    </location>
</feature>
<keyword id="KW-0007">Acetylation</keyword>
<keyword id="KW-0025">Alternative splicing</keyword>
<keyword id="KW-0067">ATP-binding</keyword>
<keyword id="KW-0131">Cell cycle</keyword>
<keyword id="KW-0158">Chromosome</keyword>
<keyword id="KW-0175">Coiled coil</keyword>
<keyword id="KW-0903">Direct protein sequencing</keyword>
<keyword id="KW-0227">DNA damage</keyword>
<keyword id="KW-0234">DNA repair</keyword>
<keyword id="KW-0378">Hydrolase</keyword>
<keyword id="KW-0460">Magnesium</keyword>
<keyword id="KW-0469">Meiosis</keyword>
<keyword id="KW-0479">Metal-binding</keyword>
<keyword id="KW-0547">Nucleotide-binding</keyword>
<keyword id="KW-0539">Nucleus</keyword>
<keyword id="KW-0597">Phosphoprotein</keyword>
<keyword id="KW-1185">Reference proteome</keyword>
<keyword id="KW-0779">Telomere</keyword>
<keyword id="KW-0862">Zinc</keyword>
<name>RAD50_MOUSE</name>
<protein>
    <recommendedName>
        <fullName>DNA repair protein RAD50</fullName>
        <shortName>mRad50</shortName>
        <ecNumber evidence="3">3.6.-.-</ecNumber>
    </recommendedName>
</protein>
<reference key="1">
    <citation type="journal article" date="1996" name="J. Biol. Chem.">
        <title>Mouse RAD50 has limited epitopic homology to p53 and is expressed in the adult myocardium.</title>
        <authorList>
            <person name="Kim K.K."/>
            <person name="Daud A.I."/>
            <person name="Wong S.C."/>
            <person name="Pajak L."/>
            <person name="Tsai S.-C."/>
            <person name="Wang H."/>
            <person name="Henzel W.J."/>
            <person name="Field L.J."/>
        </authorList>
    </citation>
    <scope>NUCLEOTIDE SEQUENCE [MRNA] (ISOFORMS 1; 3 AND 4)</scope>
    <scope>PROTEIN SEQUENCE OF 113-120; 132-140; 175-202; 230-248; 295-310; 815-832; 840-845; 1012-1026 AND 1079-1089</scope>
    <scope>TISSUE SPECIFICITY</scope>
    <scope>DEVELOPMENTAL STAGE</scope>
</reference>
<reference key="2">
    <citation type="journal article" date="2005" name="Science">
        <title>The transcriptional landscape of the mammalian genome.</title>
        <authorList>
            <person name="Carninci P."/>
            <person name="Kasukawa T."/>
            <person name="Katayama S."/>
            <person name="Gough J."/>
            <person name="Frith M.C."/>
            <person name="Maeda N."/>
            <person name="Oyama R."/>
            <person name="Ravasi T."/>
            <person name="Lenhard B."/>
            <person name="Wells C."/>
            <person name="Kodzius R."/>
            <person name="Shimokawa K."/>
            <person name="Bajic V.B."/>
            <person name="Brenner S.E."/>
            <person name="Batalov S."/>
            <person name="Forrest A.R."/>
            <person name="Zavolan M."/>
            <person name="Davis M.J."/>
            <person name="Wilming L.G."/>
            <person name="Aidinis V."/>
            <person name="Allen J.E."/>
            <person name="Ambesi-Impiombato A."/>
            <person name="Apweiler R."/>
            <person name="Aturaliya R.N."/>
            <person name="Bailey T.L."/>
            <person name="Bansal M."/>
            <person name="Baxter L."/>
            <person name="Beisel K.W."/>
            <person name="Bersano T."/>
            <person name="Bono H."/>
            <person name="Chalk A.M."/>
            <person name="Chiu K.P."/>
            <person name="Choudhary V."/>
            <person name="Christoffels A."/>
            <person name="Clutterbuck D.R."/>
            <person name="Crowe M.L."/>
            <person name="Dalla E."/>
            <person name="Dalrymple B.P."/>
            <person name="de Bono B."/>
            <person name="Della Gatta G."/>
            <person name="di Bernardo D."/>
            <person name="Down T."/>
            <person name="Engstrom P."/>
            <person name="Fagiolini M."/>
            <person name="Faulkner G."/>
            <person name="Fletcher C.F."/>
            <person name="Fukushima T."/>
            <person name="Furuno M."/>
            <person name="Futaki S."/>
            <person name="Gariboldi M."/>
            <person name="Georgii-Hemming P."/>
            <person name="Gingeras T.R."/>
            <person name="Gojobori T."/>
            <person name="Green R.E."/>
            <person name="Gustincich S."/>
            <person name="Harbers M."/>
            <person name="Hayashi Y."/>
            <person name="Hensch T.K."/>
            <person name="Hirokawa N."/>
            <person name="Hill D."/>
            <person name="Huminiecki L."/>
            <person name="Iacono M."/>
            <person name="Ikeo K."/>
            <person name="Iwama A."/>
            <person name="Ishikawa T."/>
            <person name="Jakt M."/>
            <person name="Kanapin A."/>
            <person name="Katoh M."/>
            <person name="Kawasawa Y."/>
            <person name="Kelso J."/>
            <person name="Kitamura H."/>
            <person name="Kitano H."/>
            <person name="Kollias G."/>
            <person name="Krishnan S.P."/>
            <person name="Kruger A."/>
            <person name="Kummerfeld S.K."/>
            <person name="Kurochkin I.V."/>
            <person name="Lareau L.F."/>
            <person name="Lazarevic D."/>
            <person name="Lipovich L."/>
            <person name="Liu J."/>
            <person name="Liuni S."/>
            <person name="McWilliam S."/>
            <person name="Madan Babu M."/>
            <person name="Madera M."/>
            <person name="Marchionni L."/>
            <person name="Matsuda H."/>
            <person name="Matsuzawa S."/>
            <person name="Miki H."/>
            <person name="Mignone F."/>
            <person name="Miyake S."/>
            <person name="Morris K."/>
            <person name="Mottagui-Tabar S."/>
            <person name="Mulder N."/>
            <person name="Nakano N."/>
            <person name="Nakauchi H."/>
            <person name="Ng P."/>
            <person name="Nilsson R."/>
            <person name="Nishiguchi S."/>
            <person name="Nishikawa S."/>
            <person name="Nori F."/>
            <person name="Ohara O."/>
            <person name="Okazaki Y."/>
            <person name="Orlando V."/>
            <person name="Pang K.C."/>
            <person name="Pavan W.J."/>
            <person name="Pavesi G."/>
            <person name="Pesole G."/>
            <person name="Petrovsky N."/>
            <person name="Piazza S."/>
            <person name="Reed J."/>
            <person name="Reid J.F."/>
            <person name="Ring B.Z."/>
            <person name="Ringwald M."/>
            <person name="Rost B."/>
            <person name="Ruan Y."/>
            <person name="Salzberg S.L."/>
            <person name="Sandelin A."/>
            <person name="Schneider C."/>
            <person name="Schoenbach C."/>
            <person name="Sekiguchi K."/>
            <person name="Semple C.A."/>
            <person name="Seno S."/>
            <person name="Sessa L."/>
            <person name="Sheng Y."/>
            <person name="Shibata Y."/>
            <person name="Shimada H."/>
            <person name="Shimada K."/>
            <person name="Silva D."/>
            <person name="Sinclair B."/>
            <person name="Sperling S."/>
            <person name="Stupka E."/>
            <person name="Sugiura K."/>
            <person name="Sultana R."/>
            <person name="Takenaka Y."/>
            <person name="Taki K."/>
            <person name="Tammoja K."/>
            <person name="Tan S.L."/>
            <person name="Tang S."/>
            <person name="Taylor M.S."/>
            <person name="Tegner J."/>
            <person name="Teichmann S.A."/>
            <person name="Ueda H.R."/>
            <person name="van Nimwegen E."/>
            <person name="Verardo R."/>
            <person name="Wei C.L."/>
            <person name="Yagi K."/>
            <person name="Yamanishi H."/>
            <person name="Zabarovsky E."/>
            <person name="Zhu S."/>
            <person name="Zimmer A."/>
            <person name="Hide W."/>
            <person name="Bult C."/>
            <person name="Grimmond S.M."/>
            <person name="Teasdale R.D."/>
            <person name="Liu E.T."/>
            <person name="Brusic V."/>
            <person name="Quackenbush J."/>
            <person name="Wahlestedt C."/>
            <person name="Mattick J.S."/>
            <person name="Hume D.A."/>
            <person name="Kai C."/>
            <person name="Sasaki D."/>
            <person name="Tomaru Y."/>
            <person name="Fukuda S."/>
            <person name="Kanamori-Katayama M."/>
            <person name="Suzuki M."/>
            <person name="Aoki J."/>
            <person name="Arakawa T."/>
            <person name="Iida J."/>
            <person name="Imamura K."/>
            <person name="Itoh M."/>
            <person name="Kato T."/>
            <person name="Kawaji H."/>
            <person name="Kawagashira N."/>
            <person name="Kawashima T."/>
            <person name="Kojima M."/>
            <person name="Kondo S."/>
            <person name="Konno H."/>
            <person name="Nakano K."/>
            <person name="Ninomiya N."/>
            <person name="Nishio T."/>
            <person name="Okada M."/>
            <person name="Plessy C."/>
            <person name="Shibata K."/>
            <person name="Shiraki T."/>
            <person name="Suzuki S."/>
            <person name="Tagami M."/>
            <person name="Waki K."/>
            <person name="Watahiki A."/>
            <person name="Okamura-Oho Y."/>
            <person name="Suzuki H."/>
            <person name="Kawai J."/>
            <person name="Hayashizaki Y."/>
        </authorList>
    </citation>
    <scope>NUCLEOTIDE SEQUENCE [LARGE SCALE MRNA] OF 1-214 AND 443-743 (ISOFORM 1)</scope>
    <source>
        <strain>C57BL/6J</strain>
        <strain>NOD</strain>
        <tissue>Thymus</tissue>
    </source>
</reference>
<reference key="3">
    <citation type="journal article" date="2004" name="Genome Res.">
        <title>The status, quality, and expansion of the NIH full-length cDNA project: the Mammalian Gene Collection (MGC).</title>
        <authorList>
            <consortium name="The MGC Project Team"/>
        </authorList>
    </citation>
    <scope>NUCLEOTIDE SEQUENCE [LARGE SCALE MRNA] OF 1-722 (ISOFORM 2)</scope>
    <source>
        <strain>NMRI</strain>
        <tissue>Mammary tumor</tissue>
    </source>
</reference>
<reference key="4">
    <citation type="journal article" date="1999" name="Proc. Natl. Acad. Sci. U.S.A.">
        <title>Disruption of mRad50 causes embryonic stem cell lethality, abnormal embryonic development, and sensitivity to ionizing radiation.</title>
        <authorList>
            <person name="Luo G."/>
            <person name="Yao M.S."/>
            <person name="Bender C.F."/>
            <person name="Mills M."/>
            <person name="Bladl A.R."/>
            <person name="Bradley A."/>
            <person name="Petrini J.H.J."/>
        </authorList>
    </citation>
    <scope>FUNCTION</scope>
    <scope>DISRUPTION PHENOTYPE</scope>
</reference>
<reference key="5">
    <citation type="journal article" date="2002" name="Genes Dev.">
        <title>Cancer predisposition and hematopoietic failure in Rad50(S/S) mice.</title>
        <authorList>
            <person name="Bender C.F."/>
            <person name="Sikes M.L."/>
            <person name="Sullivan R."/>
            <person name="Huye L.E."/>
            <person name="Le Beau M.M."/>
            <person name="Roth D.B."/>
            <person name="Mirzoeva O.K."/>
            <person name="Oltz E.M."/>
            <person name="Petrini J.H.J."/>
        </authorList>
    </citation>
    <scope>FUNCTION</scope>
    <scope>MUTAGENESIS OF LYS-22</scope>
</reference>
<reference key="6">
    <citation type="journal article" date="2007" name="Science">
        <title>ATM and ATR substrate analysis reveals extensive protein networks responsive to DNA damage.</title>
        <authorList>
            <person name="Matsuoka S."/>
            <person name="Ballif B.A."/>
            <person name="Smogorzewska A."/>
            <person name="McDonald E.R. III"/>
            <person name="Hurov K.E."/>
            <person name="Luo J."/>
            <person name="Bakalarski C.E."/>
            <person name="Zhao Z."/>
            <person name="Solimini N."/>
            <person name="Lerenthal Y."/>
            <person name="Shiloh Y."/>
            <person name="Gygi S.P."/>
            <person name="Elledge S.J."/>
        </authorList>
    </citation>
    <scope>IDENTIFICATION BY MASS SPECTROMETRY [LARGE SCALE ANALYSIS]</scope>
    <source>
        <tissue>Embryonic fibroblast</tissue>
    </source>
</reference>
<reference key="7">
    <citation type="journal article" date="2010" name="Cell">
        <title>A tissue-specific atlas of mouse protein phosphorylation and expression.</title>
        <authorList>
            <person name="Huttlin E.L."/>
            <person name="Jedrychowski M.P."/>
            <person name="Elias J.E."/>
            <person name="Goswami T."/>
            <person name="Rad R."/>
            <person name="Beausoleil S.A."/>
            <person name="Villen J."/>
            <person name="Haas W."/>
            <person name="Sowa M.E."/>
            <person name="Gygi S.P."/>
        </authorList>
    </citation>
    <scope>PHOSPHORYLATION [LARGE SCALE ANALYSIS] AT SER-635 AND THR-690</scope>
    <scope>IDENTIFICATION BY MASS SPECTROMETRY [LARGE SCALE ANALYSIS]</scope>
    <source>
        <tissue>Brown adipose tissue</tissue>
        <tissue>Heart</tissue>
        <tissue>Kidney</tissue>
        <tissue>Liver</tissue>
        <tissue>Lung</tissue>
        <tissue>Pancreas</tissue>
        <tissue>Spleen</tissue>
        <tissue>Testis</tissue>
    </source>
</reference>
<reference key="8">
    <citation type="journal article" date="2018" name="Mol. Cell">
        <title>MRI is a DNA damage response adaptor during classical non-homologous end joining.</title>
        <authorList>
            <person name="Hung P.J."/>
            <person name="Johnson B."/>
            <person name="Chen B.R."/>
            <person name="Byrum A.K."/>
            <person name="Bredemeyer A.L."/>
            <person name="Yewdell W.T."/>
            <person name="Johnson T.E."/>
            <person name="Lee B.J."/>
            <person name="Deivasigamani S."/>
            <person name="Hindi I."/>
            <person name="Amatya P."/>
            <person name="Gross M.L."/>
            <person name="Paull T.T."/>
            <person name="Pisapia D.J."/>
            <person name="Chaudhuri J."/>
            <person name="Petrini J.J.H."/>
            <person name="Mosammaparast N."/>
            <person name="Amarasinghe G.K."/>
            <person name="Zha S."/>
            <person name="Tyler J.K."/>
            <person name="Sleckman B.P."/>
        </authorList>
    </citation>
    <scope>INTERACTION WITH CYREN</scope>
</reference>
<proteinExistence type="evidence at protein level"/>
<dbReference type="EC" id="3.6.-.-" evidence="3"/>
<dbReference type="EMBL" id="U66887">
    <property type="protein sequence ID" value="AAC52894.1"/>
    <property type="molecule type" value="mRNA"/>
</dbReference>
<dbReference type="EMBL" id="AK018001">
    <property type="protein sequence ID" value="BAB31030.1"/>
    <property type="molecule type" value="mRNA"/>
</dbReference>
<dbReference type="EMBL" id="AK087982">
    <property type="protein sequence ID" value="BAC40074.1"/>
    <property type="molecule type" value="mRNA"/>
</dbReference>
<dbReference type="EMBL" id="BC058180">
    <property type="protein sequence ID" value="AAH58180.1"/>
    <property type="molecule type" value="mRNA"/>
</dbReference>
<dbReference type="CCDS" id="CCDS24684.1">
    <molecule id="P70388-1"/>
</dbReference>
<dbReference type="PIR" id="T30845">
    <property type="entry name" value="T30845"/>
</dbReference>
<dbReference type="SMR" id="P70388"/>
<dbReference type="ComplexPortal" id="CPX-4703">
    <property type="entry name" value="MRN double-strand break repair complex"/>
</dbReference>
<dbReference type="DIP" id="DIP-46805N"/>
<dbReference type="FunCoup" id="P70388">
    <property type="interactions" value="3283"/>
</dbReference>
<dbReference type="IntAct" id="P70388">
    <property type="interactions" value="5"/>
</dbReference>
<dbReference type="STRING" id="10090.ENSMUSP00000020649"/>
<dbReference type="GlyGen" id="P70388">
    <property type="glycosylation" value="1 site, 1 O-linked glycan (1 site)"/>
</dbReference>
<dbReference type="iPTMnet" id="P70388"/>
<dbReference type="PhosphoSitePlus" id="P70388"/>
<dbReference type="PaxDb" id="10090-ENSMUSP00000020649"/>
<dbReference type="PeptideAtlas" id="P70388"/>
<dbReference type="ProteomicsDB" id="300229">
    <molecule id="P70388-1"/>
</dbReference>
<dbReference type="ProteomicsDB" id="300230">
    <molecule id="P70388-2"/>
</dbReference>
<dbReference type="ProteomicsDB" id="300231">
    <molecule id="P70388-3"/>
</dbReference>
<dbReference type="ProteomicsDB" id="300232">
    <molecule id="P70388-4"/>
</dbReference>
<dbReference type="Pumba" id="P70388"/>
<dbReference type="UCSC" id="uc011xus.1">
    <molecule id="P70388-2"/>
    <property type="organism name" value="mouse"/>
</dbReference>
<dbReference type="AGR" id="MGI:109292"/>
<dbReference type="MGI" id="MGI:109292">
    <property type="gene designation" value="Rad50"/>
</dbReference>
<dbReference type="eggNOG" id="KOG0962">
    <property type="taxonomic scope" value="Eukaryota"/>
</dbReference>
<dbReference type="InParanoid" id="P70388"/>
<dbReference type="PhylomeDB" id="P70388"/>
<dbReference type="Reactome" id="R-MMU-2559586">
    <property type="pathway name" value="DNA Damage/Telomere Stress Induced Senescence"/>
</dbReference>
<dbReference type="Reactome" id="R-MMU-5685938">
    <property type="pathway name" value="HDR through Single Strand Annealing (SSA)"/>
</dbReference>
<dbReference type="Reactome" id="R-MMU-5685939">
    <property type="pathway name" value="HDR through MMEJ (alt-NHEJ)"/>
</dbReference>
<dbReference type="Reactome" id="R-MMU-5685942">
    <property type="pathway name" value="HDR through Homologous Recombination (HRR)"/>
</dbReference>
<dbReference type="Reactome" id="R-MMU-5693548">
    <property type="pathway name" value="Sensing of DNA Double Strand Breaks"/>
</dbReference>
<dbReference type="Reactome" id="R-MMU-5693565">
    <property type="pathway name" value="Recruitment and ATM-mediated phosphorylation of repair and signaling proteins at DNA double strand breaks"/>
</dbReference>
<dbReference type="Reactome" id="R-MMU-5693568">
    <property type="pathway name" value="Resolution of D-loop Structures through Holliday Junction Intermediates"/>
</dbReference>
<dbReference type="Reactome" id="R-MMU-5693571">
    <property type="pathway name" value="Nonhomologous End-Joining (NHEJ)"/>
</dbReference>
<dbReference type="Reactome" id="R-MMU-5693579">
    <property type="pathway name" value="Homologous DNA Pairing and Strand Exchange"/>
</dbReference>
<dbReference type="Reactome" id="R-MMU-5693607">
    <property type="pathway name" value="Processing of DNA double-strand break ends"/>
</dbReference>
<dbReference type="Reactome" id="R-MMU-5693616">
    <property type="pathway name" value="Presynaptic phase of homologous DNA pairing and strand exchange"/>
</dbReference>
<dbReference type="Reactome" id="R-MMU-6804756">
    <property type="pathway name" value="Regulation of TP53 Activity through Phosphorylation"/>
</dbReference>
<dbReference type="Reactome" id="R-MMU-69473">
    <property type="pathway name" value="G2/M DNA damage checkpoint"/>
</dbReference>
<dbReference type="ChiTaRS" id="Rad50">
    <property type="organism name" value="mouse"/>
</dbReference>
<dbReference type="PRO" id="PR:P70388"/>
<dbReference type="Proteomes" id="UP000000589">
    <property type="component" value="Unplaced"/>
</dbReference>
<dbReference type="RNAct" id="P70388">
    <property type="molecule type" value="protein"/>
</dbReference>
<dbReference type="GO" id="GO:0070533">
    <property type="term" value="C:BRCA1-C complex"/>
    <property type="evidence" value="ECO:0000266"/>
    <property type="project" value="ComplexPortal"/>
</dbReference>
<dbReference type="GO" id="GO:0098687">
    <property type="term" value="C:chromosomal region"/>
    <property type="evidence" value="ECO:0000303"/>
    <property type="project" value="ComplexPortal"/>
</dbReference>
<dbReference type="GO" id="GO:0000781">
    <property type="term" value="C:chromosome, telomeric region"/>
    <property type="evidence" value="ECO:0007669"/>
    <property type="project" value="UniProtKB-SubCell"/>
</dbReference>
<dbReference type="GO" id="GO:0030870">
    <property type="term" value="C:Mre11 complex"/>
    <property type="evidence" value="ECO:0000314"/>
    <property type="project" value="UniProtKB"/>
</dbReference>
<dbReference type="GO" id="GO:0005634">
    <property type="term" value="C:nucleus"/>
    <property type="evidence" value="ECO:0000314"/>
    <property type="project" value="MGI"/>
</dbReference>
<dbReference type="GO" id="GO:0045120">
    <property type="term" value="C:pronucleus"/>
    <property type="evidence" value="ECO:0000314"/>
    <property type="project" value="MGI"/>
</dbReference>
<dbReference type="GO" id="GO:0035861">
    <property type="term" value="C:site of double-strand break"/>
    <property type="evidence" value="ECO:0000250"/>
    <property type="project" value="UniProtKB"/>
</dbReference>
<dbReference type="GO" id="GO:0005524">
    <property type="term" value="F:ATP binding"/>
    <property type="evidence" value="ECO:0007669"/>
    <property type="project" value="UniProtKB-KW"/>
</dbReference>
<dbReference type="GO" id="GO:0016887">
    <property type="term" value="F:ATP hydrolysis activity"/>
    <property type="evidence" value="ECO:0007669"/>
    <property type="project" value="InterPro"/>
</dbReference>
<dbReference type="GO" id="GO:0046872">
    <property type="term" value="F:metal ion binding"/>
    <property type="evidence" value="ECO:0007669"/>
    <property type="project" value="UniProtKB-KW"/>
</dbReference>
<dbReference type="GO" id="GO:0043539">
    <property type="term" value="F:protein serine/threonine kinase activator activity"/>
    <property type="evidence" value="ECO:0000250"/>
    <property type="project" value="UniProtKB"/>
</dbReference>
<dbReference type="GO" id="GO:0051276">
    <property type="term" value="P:chromosome organization"/>
    <property type="evidence" value="ECO:0000315"/>
    <property type="project" value="MGI"/>
</dbReference>
<dbReference type="GO" id="GO:0070192">
    <property type="term" value="P:chromosome organization involved in meiotic cell cycle"/>
    <property type="evidence" value="ECO:0000315"/>
    <property type="project" value="MGI"/>
</dbReference>
<dbReference type="GO" id="GO:0006974">
    <property type="term" value="P:DNA damage response"/>
    <property type="evidence" value="ECO:0000266"/>
    <property type="project" value="MGI"/>
</dbReference>
<dbReference type="GO" id="GO:0000729">
    <property type="term" value="P:DNA double-strand break processing"/>
    <property type="evidence" value="ECO:0000250"/>
    <property type="project" value="UniProtKB"/>
</dbReference>
<dbReference type="GO" id="GO:0110025">
    <property type="term" value="P:DNA strand resection involved in replication fork processing"/>
    <property type="evidence" value="ECO:0000303"/>
    <property type="project" value="ComplexPortal"/>
</dbReference>
<dbReference type="GO" id="GO:0035825">
    <property type="term" value="P:homologous recombination"/>
    <property type="evidence" value="ECO:0000303"/>
    <property type="project" value="ComplexPortal"/>
</dbReference>
<dbReference type="GO" id="GO:0044818">
    <property type="term" value="P:mitotic G2/M transition checkpoint"/>
    <property type="evidence" value="ECO:0000303"/>
    <property type="project" value="ComplexPortal"/>
</dbReference>
<dbReference type="GO" id="GO:0062176">
    <property type="term" value="P:R-loop processing"/>
    <property type="evidence" value="ECO:0000250"/>
    <property type="project" value="UniProtKB"/>
</dbReference>
<dbReference type="GO" id="GO:0007346">
    <property type="term" value="P:regulation of mitotic cell cycle"/>
    <property type="evidence" value="ECO:0000315"/>
    <property type="project" value="MGI"/>
</dbReference>
<dbReference type="GO" id="GO:0000723">
    <property type="term" value="P:telomere maintenance"/>
    <property type="evidence" value="ECO:0007669"/>
    <property type="project" value="InterPro"/>
</dbReference>
<dbReference type="FunFam" id="3.40.50.300:FF:001037">
    <property type="entry name" value="DNA repair protein RAD50"/>
    <property type="match status" value="1"/>
</dbReference>
<dbReference type="FunFam" id="3.40.50.300:FF:001065">
    <property type="entry name" value="DNA repair protein RAD50 isoform X1"/>
    <property type="match status" value="1"/>
</dbReference>
<dbReference type="Gene3D" id="3.40.50.300">
    <property type="entry name" value="P-loop containing nucleotide triphosphate hydrolases"/>
    <property type="match status" value="2"/>
</dbReference>
<dbReference type="InterPro" id="IPR027417">
    <property type="entry name" value="P-loop_NTPase"/>
</dbReference>
<dbReference type="InterPro" id="IPR038729">
    <property type="entry name" value="Rad50/SbcC_AAA"/>
</dbReference>
<dbReference type="InterPro" id="IPR004584">
    <property type="entry name" value="Rad50_eukaryotes"/>
</dbReference>
<dbReference type="InterPro" id="IPR013134">
    <property type="entry name" value="Zn_hook_RAD50"/>
</dbReference>
<dbReference type="NCBIfam" id="TIGR00606">
    <property type="entry name" value="rad50"/>
    <property type="match status" value="1"/>
</dbReference>
<dbReference type="PANTHER" id="PTHR18867:SF12">
    <property type="entry name" value="DNA REPAIR PROTEIN RAD50"/>
    <property type="match status" value="1"/>
</dbReference>
<dbReference type="PANTHER" id="PTHR18867">
    <property type="entry name" value="RAD50"/>
    <property type="match status" value="1"/>
</dbReference>
<dbReference type="Pfam" id="PF13476">
    <property type="entry name" value="AAA_23"/>
    <property type="match status" value="1"/>
</dbReference>
<dbReference type="Pfam" id="PF04423">
    <property type="entry name" value="Rad50_zn_hook"/>
    <property type="match status" value="1"/>
</dbReference>
<dbReference type="Pfam" id="PF13558">
    <property type="entry name" value="SbcC_Walker_B"/>
    <property type="match status" value="1"/>
</dbReference>
<dbReference type="SUPFAM" id="SSF52540">
    <property type="entry name" value="P-loop containing nucleoside triphosphate hydrolases"/>
    <property type="match status" value="1"/>
</dbReference>
<dbReference type="SUPFAM" id="SSF75712">
    <property type="entry name" value="Rad50 coiled-coil Zn hook"/>
    <property type="match status" value="1"/>
</dbReference>
<dbReference type="PROSITE" id="PS51131">
    <property type="entry name" value="ZN_HOOK"/>
    <property type="match status" value="1"/>
</dbReference>
<evidence type="ECO:0000250" key="1">
    <source>
        <dbReference type="UniProtKB" id="G0SHW7"/>
    </source>
</evidence>
<evidence type="ECO:0000250" key="2">
    <source>
        <dbReference type="UniProtKB" id="P58301"/>
    </source>
</evidence>
<evidence type="ECO:0000250" key="3">
    <source>
        <dbReference type="UniProtKB" id="Q92878"/>
    </source>
</evidence>
<evidence type="ECO:0000250" key="4">
    <source>
        <dbReference type="UniProtKB" id="Q9X1X1"/>
    </source>
</evidence>
<evidence type="ECO:0000255" key="5"/>
<evidence type="ECO:0000255" key="6">
    <source>
        <dbReference type="PROSITE-ProRule" id="PRU00471"/>
    </source>
</evidence>
<evidence type="ECO:0000269" key="7">
    <source>
    </source>
</evidence>
<evidence type="ECO:0000269" key="8">
    <source>
    </source>
</evidence>
<evidence type="ECO:0000269" key="9">
    <source>
    </source>
</evidence>
<evidence type="ECO:0000269" key="10">
    <source>
    </source>
</evidence>
<evidence type="ECO:0000303" key="11">
    <source>
    </source>
</evidence>
<evidence type="ECO:0000303" key="12">
    <source>
    </source>
</evidence>
<evidence type="ECO:0000305" key="13"/>
<evidence type="ECO:0007744" key="14">
    <source>
    </source>
</evidence>
<gene>
    <name type="primary">Rad50</name>
</gene>
<organism>
    <name type="scientific">Mus musculus</name>
    <name type="common">Mouse</name>
    <dbReference type="NCBI Taxonomy" id="10090"/>
    <lineage>
        <taxon>Eukaryota</taxon>
        <taxon>Metazoa</taxon>
        <taxon>Chordata</taxon>
        <taxon>Craniata</taxon>
        <taxon>Vertebrata</taxon>
        <taxon>Euteleostomi</taxon>
        <taxon>Mammalia</taxon>
        <taxon>Eutheria</taxon>
        <taxon>Euarchontoglires</taxon>
        <taxon>Glires</taxon>
        <taxon>Rodentia</taxon>
        <taxon>Myomorpha</taxon>
        <taxon>Muroidea</taxon>
        <taxon>Muridae</taxon>
        <taxon>Murinae</taxon>
        <taxon>Mus</taxon>
        <taxon>Mus</taxon>
    </lineage>
</organism>
<accession>P70388</accession>
<accession>Q6PEB0</accession>
<accession>Q8C2T7</accession>
<accession>Q9CU59</accession>